<comment type="function">
    <text evidence="1">Catalyzes the oxidation of 5,10-methylenetetrahydrofolate to 5,10-methenyltetrahydrofolate and then the hydrolysis of 5,10-methenyltetrahydrofolate to 10-formyltetrahydrofolate.</text>
</comment>
<comment type="catalytic activity">
    <reaction evidence="1">
        <text>(6R)-5,10-methylene-5,6,7,8-tetrahydrofolate + NADP(+) = (6R)-5,10-methenyltetrahydrofolate + NADPH</text>
        <dbReference type="Rhea" id="RHEA:22812"/>
        <dbReference type="ChEBI" id="CHEBI:15636"/>
        <dbReference type="ChEBI" id="CHEBI:57455"/>
        <dbReference type="ChEBI" id="CHEBI:57783"/>
        <dbReference type="ChEBI" id="CHEBI:58349"/>
        <dbReference type="EC" id="1.5.1.5"/>
    </reaction>
</comment>
<comment type="catalytic activity">
    <reaction evidence="1">
        <text>(6R)-5,10-methenyltetrahydrofolate + H2O = (6R)-10-formyltetrahydrofolate + H(+)</text>
        <dbReference type="Rhea" id="RHEA:23700"/>
        <dbReference type="ChEBI" id="CHEBI:15377"/>
        <dbReference type="ChEBI" id="CHEBI:15378"/>
        <dbReference type="ChEBI" id="CHEBI:57455"/>
        <dbReference type="ChEBI" id="CHEBI:195366"/>
        <dbReference type="EC" id="3.5.4.9"/>
    </reaction>
</comment>
<comment type="pathway">
    <text evidence="1">One-carbon metabolism; tetrahydrofolate interconversion.</text>
</comment>
<comment type="subunit">
    <text evidence="1">Homodimer.</text>
</comment>
<comment type="similarity">
    <text evidence="1">Belongs to the tetrahydrofolate dehydrogenase/cyclohydrolase family.</text>
</comment>
<proteinExistence type="inferred from homology"/>
<protein>
    <recommendedName>
        <fullName evidence="1">Bifunctional protein FolD</fullName>
    </recommendedName>
    <domain>
        <recommendedName>
            <fullName evidence="1">Methylenetetrahydrofolate dehydrogenase</fullName>
            <ecNumber evidence="1">1.5.1.5</ecNumber>
        </recommendedName>
    </domain>
    <domain>
        <recommendedName>
            <fullName evidence="1">Methenyltetrahydrofolate cyclohydrolase</fullName>
            <ecNumber evidence="1">3.5.4.9</ecNumber>
        </recommendedName>
    </domain>
</protein>
<reference key="1">
    <citation type="journal article" date="2007" name="J. Bacteriol.">
        <title>The complete genome sequence of Bacillus thuringiensis Al Hakam.</title>
        <authorList>
            <person name="Challacombe J.F."/>
            <person name="Altherr M.R."/>
            <person name="Xie G."/>
            <person name="Bhotika S.S."/>
            <person name="Brown N."/>
            <person name="Bruce D."/>
            <person name="Campbell C.S."/>
            <person name="Campbell M.L."/>
            <person name="Chen J."/>
            <person name="Chertkov O."/>
            <person name="Cleland C."/>
            <person name="Dimitrijevic M."/>
            <person name="Doggett N.A."/>
            <person name="Fawcett J.J."/>
            <person name="Glavina T."/>
            <person name="Goodwin L.A."/>
            <person name="Green L.D."/>
            <person name="Han C.S."/>
            <person name="Hill K.K."/>
            <person name="Hitchcock P."/>
            <person name="Jackson P.J."/>
            <person name="Keim P."/>
            <person name="Kewalramani A.R."/>
            <person name="Longmire J."/>
            <person name="Lucas S."/>
            <person name="Malfatti S."/>
            <person name="Martinez D."/>
            <person name="McMurry K."/>
            <person name="Meincke L.J."/>
            <person name="Misra M."/>
            <person name="Moseman B.L."/>
            <person name="Mundt M."/>
            <person name="Munk A.C."/>
            <person name="Okinaka R.T."/>
            <person name="Parson-Quintana B."/>
            <person name="Reilly L.P."/>
            <person name="Richardson P."/>
            <person name="Robinson D.L."/>
            <person name="Saunders E."/>
            <person name="Tapia R."/>
            <person name="Tesmer J.G."/>
            <person name="Thayer N."/>
            <person name="Thompson L.S."/>
            <person name="Tice H."/>
            <person name="Ticknor L.O."/>
            <person name="Wills P.L."/>
            <person name="Gilna P."/>
            <person name="Brettin T.S."/>
        </authorList>
    </citation>
    <scope>NUCLEOTIDE SEQUENCE [LARGE SCALE GENOMIC DNA]</scope>
    <source>
        <strain>Al Hakam</strain>
    </source>
</reference>
<keyword id="KW-0028">Amino-acid biosynthesis</keyword>
<keyword id="KW-0368">Histidine biosynthesis</keyword>
<keyword id="KW-0378">Hydrolase</keyword>
<keyword id="KW-0486">Methionine biosynthesis</keyword>
<keyword id="KW-0511">Multifunctional enzyme</keyword>
<keyword id="KW-0521">NADP</keyword>
<keyword id="KW-0554">One-carbon metabolism</keyword>
<keyword id="KW-0560">Oxidoreductase</keyword>
<keyword id="KW-0658">Purine biosynthesis</keyword>
<gene>
    <name evidence="1" type="primary">folD</name>
    <name type="ordered locus">BALH_3789</name>
</gene>
<feature type="chain" id="PRO_0000305794" description="Bifunctional protein FolD">
    <location>
        <begin position="1"/>
        <end position="286"/>
    </location>
</feature>
<feature type="binding site" evidence="1">
    <location>
        <begin position="165"/>
        <end position="167"/>
    </location>
    <ligand>
        <name>NADP(+)</name>
        <dbReference type="ChEBI" id="CHEBI:58349"/>
    </ligand>
</feature>
<feature type="binding site" evidence="1">
    <location>
        <position position="190"/>
    </location>
    <ligand>
        <name>NADP(+)</name>
        <dbReference type="ChEBI" id="CHEBI:58349"/>
    </ligand>
</feature>
<feature type="binding site" evidence="1">
    <location>
        <position position="231"/>
    </location>
    <ligand>
        <name>NADP(+)</name>
        <dbReference type="ChEBI" id="CHEBI:58349"/>
    </ligand>
</feature>
<name>FOLD_BACAH</name>
<evidence type="ECO:0000255" key="1">
    <source>
        <dbReference type="HAMAP-Rule" id="MF_01576"/>
    </source>
</evidence>
<sequence>MVAVIIKGNEVAEKKRAQLKEEVVKLKEQGIVPGLAVILVGEDPASRSYVKGKEKGCEQVGIYSELIEFPETITEERLLAEIDRLNGDDRINGILVQLPLPKHIEEKAIIERISPEKDVDGFHPISVGRMMTGQDTFLPCTPHGIVELVKETNLDISGKHVVVIGRSNIVGKPVGQLFLNENATVTYCHSKTQNMKELTKLADILIVAVGRPKMVTADYIKEGAVVIDVGVNRLETGKLCGDVDFDNVLDVAGYITPVPKGVGPMTITMLLHNTVESAKRAGVVCK</sequence>
<organism>
    <name type="scientific">Bacillus thuringiensis (strain Al Hakam)</name>
    <dbReference type="NCBI Taxonomy" id="412694"/>
    <lineage>
        <taxon>Bacteria</taxon>
        <taxon>Bacillati</taxon>
        <taxon>Bacillota</taxon>
        <taxon>Bacilli</taxon>
        <taxon>Bacillales</taxon>
        <taxon>Bacillaceae</taxon>
        <taxon>Bacillus</taxon>
        <taxon>Bacillus cereus group</taxon>
    </lineage>
</organism>
<dbReference type="EC" id="1.5.1.5" evidence="1"/>
<dbReference type="EC" id="3.5.4.9" evidence="1"/>
<dbReference type="EMBL" id="CP000485">
    <property type="protein sequence ID" value="ABK87016.1"/>
    <property type="molecule type" value="Genomic_DNA"/>
</dbReference>
<dbReference type="RefSeq" id="WP_000226720.1">
    <property type="nucleotide sequence ID" value="NC_008600.1"/>
</dbReference>
<dbReference type="SMR" id="A0RIH3"/>
<dbReference type="KEGG" id="btl:BALH_3789"/>
<dbReference type="HOGENOM" id="CLU_034045_2_1_9"/>
<dbReference type="UniPathway" id="UPA00193"/>
<dbReference type="GO" id="GO:0005829">
    <property type="term" value="C:cytosol"/>
    <property type="evidence" value="ECO:0007669"/>
    <property type="project" value="TreeGrafter"/>
</dbReference>
<dbReference type="GO" id="GO:0004477">
    <property type="term" value="F:methenyltetrahydrofolate cyclohydrolase activity"/>
    <property type="evidence" value="ECO:0007669"/>
    <property type="project" value="UniProtKB-UniRule"/>
</dbReference>
<dbReference type="GO" id="GO:0004488">
    <property type="term" value="F:methylenetetrahydrofolate dehydrogenase (NADP+) activity"/>
    <property type="evidence" value="ECO:0007669"/>
    <property type="project" value="UniProtKB-UniRule"/>
</dbReference>
<dbReference type="GO" id="GO:0000105">
    <property type="term" value="P:L-histidine biosynthetic process"/>
    <property type="evidence" value="ECO:0007669"/>
    <property type="project" value="UniProtKB-KW"/>
</dbReference>
<dbReference type="GO" id="GO:0009086">
    <property type="term" value="P:methionine biosynthetic process"/>
    <property type="evidence" value="ECO:0007669"/>
    <property type="project" value="UniProtKB-KW"/>
</dbReference>
<dbReference type="GO" id="GO:0006164">
    <property type="term" value="P:purine nucleotide biosynthetic process"/>
    <property type="evidence" value="ECO:0007669"/>
    <property type="project" value="UniProtKB-KW"/>
</dbReference>
<dbReference type="GO" id="GO:0035999">
    <property type="term" value="P:tetrahydrofolate interconversion"/>
    <property type="evidence" value="ECO:0007669"/>
    <property type="project" value="UniProtKB-UniRule"/>
</dbReference>
<dbReference type="CDD" id="cd01080">
    <property type="entry name" value="NAD_bind_m-THF_DH_Cyclohyd"/>
    <property type="match status" value="1"/>
</dbReference>
<dbReference type="FunFam" id="3.40.50.10860:FF:000001">
    <property type="entry name" value="Bifunctional protein FolD"/>
    <property type="match status" value="1"/>
</dbReference>
<dbReference type="FunFam" id="3.40.50.720:FF:000006">
    <property type="entry name" value="Bifunctional protein FolD"/>
    <property type="match status" value="1"/>
</dbReference>
<dbReference type="Gene3D" id="3.40.50.10860">
    <property type="entry name" value="Leucine Dehydrogenase, chain A, domain 1"/>
    <property type="match status" value="1"/>
</dbReference>
<dbReference type="Gene3D" id="3.40.50.720">
    <property type="entry name" value="NAD(P)-binding Rossmann-like Domain"/>
    <property type="match status" value="1"/>
</dbReference>
<dbReference type="HAMAP" id="MF_01576">
    <property type="entry name" value="THF_DHG_CYH"/>
    <property type="match status" value="1"/>
</dbReference>
<dbReference type="InterPro" id="IPR046346">
    <property type="entry name" value="Aminoacid_DH-like_N_sf"/>
</dbReference>
<dbReference type="InterPro" id="IPR036291">
    <property type="entry name" value="NAD(P)-bd_dom_sf"/>
</dbReference>
<dbReference type="InterPro" id="IPR000672">
    <property type="entry name" value="THF_DH/CycHdrlase"/>
</dbReference>
<dbReference type="InterPro" id="IPR020630">
    <property type="entry name" value="THF_DH/CycHdrlase_cat_dom"/>
</dbReference>
<dbReference type="InterPro" id="IPR020867">
    <property type="entry name" value="THF_DH/CycHdrlase_CS"/>
</dbReference>
<dbReference type="InterPro" id="IPR020631">
    <property type="entry name" value="THF_DH/CycHdrlase_NAD-bd_dom"/>
</dbReference>
<dbReference type="NCBIfam" id="NF008058">
    <property type="entry name" value="PRK10792.1"/>
    <property type="match status" value="1"/>
</dbReference>
<dbReference type="NCBIfam" id="NF010783">
    <property type="entry name" value="PRK14186.1"/>
    <property type="match status" value="1"/>
</dbReference>
<dbReference type="PANTHER" id="PTHR48099:SF5">
    <property type="entry name" value="C-1-TETRAHYDROFOLATE SYNTHASE, CYTOPLASMIC"/>
    <property type="match status" value="1"/>
</dbReference>
<dbReference type="PANTHER" id="PTHR48099">
    <property type="entry name" value="C-1-TETRAHYDROFOLATE SYNTHASE, CYTOPLASMIC-RELATED"/>
    <property type="match status" value="1"/>
</dbReference>
<dbReference type="Pfam" id="PF00763">
    <property type="entry name" value="THF_DHG_CYH"/>
    <property type="match status" value="1"/>
</dbReference>
<dbReference type="Pfam" id="PF02882">
    <property type="entry name" value="THF_DHG_CYH_C"/>
    <property type="match status" value="1"/>
</dbReference>
<dbReference type="PRINTS" id="PR00085">
    <property type="entry name" value="THFDHDRGNASE"/>
</dbReference>
<dbReference type="SUPFAM" id="SSF53223">
    <property type="entry name" value="Aminoacid dehydrogenase-like, N-terminal domain"/>
    <property type="match status" value="1"/>
</dbReference>
<dbReference type="SUPFAM" id="SSF51735">
    <property type="entry name" value="NAD(P)-binding Rossmann-fold domains"/>
    <property type="match status" value="1"/>
</dbReference>
<dbReference type="PROSITE" id="PS00767">
    <property type="entry name" value="THF_DHG_CYH_2"/>
    <property type="match status" value="1"/>
</dbReference>
<accession>A0RIH3</accession>